<comment type="similarity">
    <text evidence="3">Belongs to the arrestin family.</text>
</comment>
<sequence length="654" mass="74207">MTQRSLKINIIEGKDLKGLDSGGVSDCYVKFKCGPISAKTEVIKKSTSPIWNYMINIGNVEENTLLQFECFDWERIGNNRTMGKTQAFVSDLSSGAKRNLMDQWLRLDTKGFIRISYEFTPPYPLETESTNSPNLSVVGNGSSSSSSLMYNPTPVYFKPIFLPTIPSETINNNKSTTCHFLIPGSVYQTRPFVCGEFVNCSLVLNVFEARIVVRSLNLSFSGSITYKGKKQRKLVNDYRDLLLGFTGGVPVPNNNGNNNLTSNKVVLERGKHVFPFQFFIDKTCKSTVNLTDYKVNYYLSFHADIVNQPDISASQEIKVVNLEDTVYKQTISPINAQTSKSPLTGGNISISCKSVKNSFYPGEEIELEVEVNNSSKKKIKNVDIQLNKVEYDGTDVTGTSYQLLTMTKKFYPKIKQNTACKQMVVIELPSTTQCVGLIHSIAETKMIRVEYHLLVNLDIPSCVDLRLKLPITIVQPDPKFETLPNPLTEIGNLPRYVKDWSIKNFHSWVLFKKQCPDVMALNPEFYQYNLSGSDLMQLPTETLYSIFKGAGPRTQELVNDLQSQIFEIKLVRNFLKELQLSNLIDYFEKQTITWDILLQLNYNEIFSITDITIGDAKRIFLKIQQIQSERQKQQEQQEQQVVSNLEAVSLQKSE</sequence>
<evidence type="ECO:0000255" key="1"/>
<evidence type="ECO:0000255" key="2">
    <source>
        <dbReference type="PROSITE-ProRule" id="PRU00041"/>
    </source>
</evidence>
<evidence type="ECO:0000305" key="3"/>
<gene>
    <name type="primary">adcC</name>
    <name type="ORF">DDB_G0271022</name>
</gene>
<name>ADCC_DICDI</name>
<organism>
    <name type="scientific">Dictyostelium discoideum</name>
    <name type="common">Social amoeba</name>
    <dbReference type="NCBI Taxonomy" id="44689"/>
    <lineage>
        <taxon>Eukaryota</taxon>
        <taxon>Amoebozoa</taxon>
        <taxon>Evosea</taxon>
        <taxon>Eumycetozoa</taxon>
        <taxon>Dictyostelia</taxon>
        <taxon>Dictyosteliales</taxon>
        <taxon>Dictyosteliaceae</taxon>
        <taxon>Dictyostelium</taxon>
    </lineage>
</organism>
<reference key="1">
    <citation type="journal article" date="2005" name="Nature">
        <title>The genome of the social amoeba Dictyostelium discoideum.</title>
        <authorList>
            <person name="Eichinger L."/>
            <person name="Pachebat J.A."/>
            <person name="Gloeckner G."/>
            <person name="Rajandream M.A."/>
            <person name="Sucgang R."/>
            <person name="Berriman M."/>
            <person name="Song J."/>
            <person name="Olsen R."/>
            <person name="Szafranski K."/>
            <person name="Xu Q."/>
            <person name="Tunggal B."/>
            <person name="Kummerfeld S."/>
            <person name="Madera M."/>
            <person name="Konfortov B.A."/>
            <person name="Rivero F."/>
            <person name="Bankier A.T."/>
            <person name="Lehmann R."/>
            <person name="Hamlin N."/>
            <person name="Davies R."/>
            <person name="Gaudet P."/>
            <person name="Fey P."/>
            <person name="Pilcher K."/>
            <person name="Chen G."/>
            <person name="Saunders D."/>
            <person name="Sodergren E.J."/>
            <person name="Davis P."/>
            <person name="Kerhornou A."/>
            <person name="Nie X."/>
            <person name="Hall N."/>
            <person name="Anjard C."/>
            <person name="Hemphill L."/>
            <person name="Bason N."/>
            <person name="Farbrother P."/>
            <person name="Desany B."/>
            <person name="Just E."/>
            <person name="Morio T."/>
            <person name="Rost R."/>
            <person name="Churcher C.M."/>
            <person name="Cooper J."/>
            <person name="Haydock S."/>
            <person name="van Driessche N."/>
            <person name="Cronin A."/>
            <person name="Goodhead I."/>
            <person name="Muzny D.M."/>
            <person name="Mourier T."/>
            <person name="Pain A."/>
            <person name="Lu M."/>
            <person name="Harper D."/>
            <person name="Lindsay R."/>
            <person name="Hauser H."/>
            <person name="James K.D."/>
            <person name="Quiles M."/>
            <person name="Madan Babu M."/>
            <person name="Saito T."/>
            <person name="Buchrieser C."/>
            <person name="Wardroper A."/>
            <person name="Felder M."/>
            <person name="Thangavelu M."/>
            <person name="Johnson D."/>
            <person name="Knights A."/>
            <person name="Loulseged H."/>
            <person name="Mungall K.L."/>
            <person name="Oliver K."/>
            <person name="Price C."/>
            <person name="Quail M.A."/>
            <person name="Urushihara H."/>
            <person name="Hernandez J."/>
            <person name="Rabbinowitsch E."/>
            <person name="Steffen D."/>
            <person name="Sanders M."/>
            <person name="Ma J."/>
            <person name="Kohara Y."/>
            <person name="Sharp S."/>
            <person name="Simmonds M.N."/>
            <person name="Spiegler S."/>
            <person name="Tivey A."/>
            <person name="Sugano S."/>
            <person name="White B."/>
            <person name="Walker D."/>
            <person name="Woodward J.R."/>
            <person name="Winckler T."/>
            <person name="Tanaka Y."/>
            <person name="Shaulsky G."/>
            <person name="Schleicher M."/>
            <person name="Weinstock G.M."/>
            <person name="Rosenthal A."/>
            <person name="Cox E.C."/>
            <person name="Chisholm R.L."/>
            <person name="Gibbs R.A."/>
            <person name="Loomis W.F."/>
            <person name="Platzer M."/>
            <person name="Kay R.R."/>
            <person name="Williams J.G."/>
            <person name="Dear P.H."/>
            <person name="Noegel A.A."/>
            <person name="Barrell B.G."/>
            <person name="Kuspa A."/>
        </authorList>
    </citation>
    <scope>NUCLEOTIDE SEQUENCE [LARGE SCALE GENOMIC DNA]</scope>
    <source>
        <strain>AX4</strain>
    </source>
</reference>
<reference key="2">
    <citation type="journal article" date="2007" name="Genome Biol.">
        <title>High-throughput analysis of spatio-temporal dynamics in Dictyostelium.</title>
        <authorList>
            <person name="Sawai S."/>
            <person name="Guan X.-J."/>
            <person name="Kuspa A."/>
            <person name="Cox E.C."/>
        </authorList>
    </citation>
    <scope>IDENTIFICATION</scope>
</reference>
<protein>
    <recommendedName>
        <fullName>Arrestin domain-containing protein C</fullName>
    </recommendedName>
</protein>
<feature type="chain" id="PRO_0000363156" description="Arrestin domain-containing protein C">
    <location>
        <begin position="1"/>
        <end position="654"/>
    </location>
</feature>
<feature type="domain" description="C2" evidence="2">
    <location>
        <begin position="1"/>
        <end position="105"/>
    </location>
</feature>
<feature type="coiled-coil region" evidence="1">
    <location>
        <begin position="616"/>
        <end position="647"/>
    </location>
</feature>
<accession>Q55CH0</accession>
<proteinExistence type="inferred from homology"/>
<keyword id="KW-0175">Coiled coil</keyword>
<keyword id="KW-1185">Reference proteome</keyword>
<dbReference type="EMBL" id="AAFI02000005">
    <property type="protein sequence ID" value="EAL72861.1"/>
    <property type="molecule type" value="Genomic_DNA"/>
</dbReference>
<dbReference type="RefSeq" id="XP_646511.1">
    <property type="nucleotide sequence ID" value="XM_641419.1"/>
</dbReference>
<dbReference type="SMR" id="Q55CH0"/>
<dbReference type="FunCoup" id="Q55CH0">
    <property type="interactions" value="1"/>
</dbReference>
<dbReference type="STRING" id="44689.Q55CH0"/>
<dbReference type="PaxDb" id="44689-DDB0267092"/>
<dbReference type="EnsemblProtists" id="EAL72861">
    <property type="protein sequence ID" value="EAL72861"/>
    <property type="gene ID" value="DDB_G0271022"/>
</dbReference>
<dbReference type="GeneID" id="8617472"/>
<dbReference type="KEGG" id="ddi:DDB_G0271022"/>
<dbReference type="dictyBase" id="DDB_G0271022">
    <property type="gene designation" value="adcC"/>
</dbReference>
<dbReference type="VEuPathDB" id="AmoebaDB:DDB_G0271022"/>
<dbReference type="eggNOG" id="KOG3780">
    <property type="taxonomic scope" value="Eukaryota"/>
</dbReference>
<dbReference type="HOGENOM" id="CLU_443082_0_0_1"/>
<dbReference type="InParanoid" id="Q55CH0"/>
<dbReference type="OMA" id="KNSFYPG"/>
<dbReference type="PRO" id="PR:Q55CH0"/>
<dbReference type="Proteomes" id="UP000002195">
    <property type="component" value="Chromosome 1"/>
</dbReference>
<dbReference type="GO" id="GO:0005737">
    <property type="term" value="C:cytoplasm"/>
    <property type="evidence" value="ECO:0000318"/>
    <property type="project" value="GO_Central"/>
</dbReference>
<dbReference type="GO" id="GO:0005829">
    <property type="term" value="C:cytosol"/>
    <property type="evidence" value="ECO:0000314"/>
    <property type="project" value="dictyBase"/>
</dbReference>
<dbReference type="GO" id="GO:0005886">
    <property type="term" value="C:plasma membrane"/>
    <property type="evidence" value="ECO:0000314"/>
    <property type="project" value="dictyBase"/>
</dbReference>
<dbReference type="GO" id="GO:0008603">
    <property type="term" value="F:cAMP-dependent protein kinase regulator activity"/>
    <property type="evidence" value="ECO:0000316"/>
    <property type="project" value="dictyBase"/>
</dbReference>
<dbReference type="GO" id="GO:0042802">
    <property type="term" value="F:identical protein binding"/>
    <property type="evidence" value="ECO:0000353"/>
    <property type="project" value="dictyBase"/>
</dbReference>
<dbReference type="GO" id="GO:0031210">
    <property type="term" value="F:phosphatidylcholine binding"/>
    <property type="evidence" value="ECO:0000314"/>
    <property type="project" value="dictyBase"/>
</dbReference>
<dbReference type="GO" id="GO:0001786">
    <property type="term" value="F:phosphatidylserine binding"/>
    <property type="evidence" value="ECO:0000314"/>
    <property type="project" value="dictyBase"/>
</dbReference>
<dbReference type="GO" id="GO:0031152">
    <property type="term" value="P:aggregation involved in sorocarp development"/>
    <property type="evidence" value="ECO:0000316"/>
    <property type="project" value="dictyBase"/>
</dbReference>
<dbReference type="GO" id="GO:0002031">
    <property type="term" value="P:G protein-coupled receptor internalization"/>
    <property type="evidence" value="ECO:0000316"/>
    <property type="project" value="dictyBase"/>
</dbReference>
<dbReference type="GO" id="GO:0015031">
    <property type="term" value="P:protein transport"/>
    <property type="evidence" value="ECO:0000318"/>
    <property type="project" value="GO_Central"/>
</dbReference>
<dbReference type="GO" id="GO:0106070">
    <property type="term" value="P:regulation of adenylate cyclase-activating G protein-coupled receptor signaling pathway"/>
    <property type="evidence" value="ECO:0000316"/>
    <property type="project" value="dictyBase"/>
</dbReference>
<dbReference type="CDD" id="cd00030">
    <property type="entry name" value="C2"/>
    <property type="match status" value="1"/>
</dbReference>
<dbReference type="FunFam" id="1.10.150.50:FF:000180">
    <property type="entry name" value="Arrestin domain-containing protein B"/>
    <property type="match status" value="1"/>
</dbReference>
<dbReference type="FunFam" id="2.60.40.150:FF:000440">
    <property type="entry name" value="Arrestin domain-containing protein B"/>
    <property type="match status" value="1"/>
</dbReference>
<dbReference type="FunFam" id="2.60.40.640:FF:000069">
    <property type="entry name" value="Arrestin domain-containing protein B"/>
    <property type="match status" value="1"/>
</dbReference>
<dbReference type="FunFam" id="2.60.40.640:FF:000098">
    <property type="entry name" value="Arrestin domain-containing protein B"/>
    <property type="match status" value="1"/>
</dbReference>
<dbReference type="Gene3D" id="2.60.40.640">
    <property type="match status" value="2"/>
</dbReference>
<dbReference type="Gene3D" id="2.60.40.150">
    <property type="entry name" value="C2 domain"/>
    <property type="match status" value="1"/>
</dbReference>
<dbReference type="Gene3D" id="1.10.150.50">
    <property type="entry name" value="Transcription Factor, Ets-1"/>
    <property type="match status" value="1"/>
</dbReference>
<dbReference type="InterPro" id="IPR014752">
    <property type="entry name" value="Arrestin-like_C"/>
</dbReference>
<dbReference type="InterPro" id="IPR011021">
    <property type="entry name" value="Arrestin-like_N"/>
</dbReference>
<dbReference type="InterPro" id="IPR011022">
    <property type="entry name" value="Arrestin_C-like"/>
</dbReference>
<dbReference type="InterPro" id="IPR050357">
    <property type="entry name" value="Arrestin_domain-protein"/>
</dbReference>
<dbReference type="InterPro" id="IPR000008">
    <property type="entry name" value="C2_dom"/>
</dbReference>
<dbReference type="InterPro" id="IPR035892">
    <property type="entry name" value="C2_domain_sf"/>
</dbReference>
<dbReference type="InterPro" id="IPR014756">
    <property type="entry name" value="Ig_E-set"/>
</dbReference>
<dbReference type="InterPro" id="IPR013761">
    <property type="entry name" value="SAM/pointed_sf"/>
</dbReference>
<dbReference type="PANTHER" id="PTHR11188">
    <property type="entry name" value="ARRESTIN DOMAIN CONTAINING PROTEIN"/>
    <property type="match status" value="1"/>
</dbReference>
<dbReference type="PANTHER" id="PTHR11188:SF17">
    <property type="entry name" value="FI21816P1"/>
    <property type="match status" value="1"/>
</dbReference>
<dbReference type="Pfam" id="PF02752">
    <property type="entry name" value="Arrestin_C"/>
    <property type="match status" value="1"/>
</dbReference>
<dbReference type="Pfam" id="PF00339">
    <property type="entry name" value="Arrestin_N"/>
    <property type="match status" value="1"/>
</dbReference>
<dbReference type="Pfam" id="PF00168">
    <property type="entry name" value="C2"/>
    <property type="match status" value="1"/>
</dbReference>
<dbReference type="SMART" id="SM01017">
    <property type="entry name" value="Arrestin_C"/>
    <property type="match status" value="1"/>
</dbReference>
<dbReference type="SMART" id="SM00239">
    <property type="entry name" value="C2"/>
    <property type="match status" value="1"/>
</dbReference>
<dbReference type="SUPFAM" id="SSF49562">
    <property type="entry name" value="C2 domain (Calcium/lipid-binding domain, CaLB)"/>
    <property type="match status" value="1"/>
</dbReference>
<dbReference type="SUPFAM" id="SSF81296">
    <property type="entry name" value="E set domains"/>
    <property type="match status" value="2"/>
</dbReference>
<dbReference type="SUPFAM" id="SSF47769">
    <property type="entry name" value="SAM/Pointed domain"/>
    <property type="match status" value="1"/>
</dbReference>
<dbReference type="PROSITE" id="PS50004">
    <property type="entry name" value="C2"/>
    <property type="match status" value="1"/>
</dbReference>